<proteinExistence type="inferred from homology"/>
<comment type="function">
    <text evidence="1">This is one of the proteins that bind and probably mediate the attachment of the 5S RNA into the large ribosomal subunit, where it forms part of the central protuberance.</text>
</comment>
<comment type="subunit">
    <text evidence="1">Part of the 50S ribosomal subunit; part of the 5S rRNA/L5/L18/L25 subcomplex. Contacts the 5S and 23S rRNAs.</text>
</comment>
<comment type="similarity">
    <text evidence="1">Belongs to the universal ribosomal protein uL18 family.</text>
</comment>
<feature type="chain" id="PRO_1000086653" description="Large ribosomal subunit protein uL18">
    <location>
        <begin position="1"/>
        <end position="120"/>
    </location>
</feature>
<accession>B0CH16</accession>
<gene>
    <name evidence="1" type="primary">rplR</name>
    <name type="ordered locus">BSUIS_A1266</name>
</gene>
<dbReference type="EMBL" id="CP000911">
    <property type="protein sequence ID" value="ABY38317.1"/>
    <property type="molecule type" value="Genomic_DNA"/>
</dbReference>
<dbReference type="RefSeq" id="WP_002964346.1">
    <property type="nucleotide sequence ID" value="NC_010169.1"/>
</dbReference>
<dbReference type="SMR" id="B0CH16"/>
<dbReference type="GeneID" id="97533540"/>
<dbReference type="KEGG" id="bmt:BSUIS_A1266"/>
<dbReference type="HOGENOM" id="CLU_098841_0_1_5"/>
<dbReference type="Proteomes" id="UP000008545">
    <property type="component" value="Chromosome I"/>
</dbReference>
<dbReference type="GO" id="GO:0022625">
    <property type="term" value="C:cytosolic large ribosomal subunit"/>
    <property type="evidence" value="ECO:0007669"/>
    <property type="project" value="TreeGrafter"/>
</dbReference>
<dbReference type="GO" id="GO:0008097">
    <property type="term" value="F:5S rRNA binding"/>
    <property type="evidence" value="ECO:0007669"/>
    <property type="project" value="TreeGrafter"/>
</dbReference>
<dbReference type="GO" id="GO:0003735">
    <property type="term" value="F:structural constituent of ribosome"/>
    <property type="evidence" value="ECO:0007669"/>
    <property type="project" value="InterPro"/>
</dbReference>
<dbReference type="GO" id="GO:0006412">
    <property type="term" value="P:translation"/>
    <property type="evidence" value="ECO:0007669"/>
    <property type="project" value="UniProtKB-UniRule"/>
</dbReference>
<dbReference type="CDD" id="cd00432">
    <property type="entry name" value="Ribosomal_L18_L5e"/>
    <property type="match status" value="1"/>
</dbReference>
<dbReference type="FunFam" id="3.30.420.100:FF:000001">
    <property type="entry name" value="50S ribosomal protein L18"/>
    <property type="match status" value="1"/>
</dbReference>
<dbReference type="Gene3D" id="3.30.420.100">
    <property type="match status" value="1"/>
</dbReference>
<dbReference type="HAMAP" id="MF_01337_B">
    <property type="entry name" value="Ribosomal_uL18_B"/>
    <property type="match status" value="1"/>
</dbReference>
<dbReference type="InterPro" id="IPR004389">
    <property type="entry name" value="Ribosomal_uL18_bac-type"/>
</dbReference>
<dbReference type="InterPro" id="IPR005484">
    <property type="entry name" value="Ribosomal_uL18_bac/euk"/>
</dbReference>
<dbReference type="NCBIfam" id="TIGR00060">
    <property type="entry name" value="L18_bact"/>
    <property type="match status" value="1"/>
</dbReference>
<dbReference type="PANTHER" id="PTHR12899">
    <property type="entry name" value="39S RIBOSOMAL PROTEIN L18, MITOCHONDRIAL"/>
    <property type="match status" value="1"/>
</dbReference>
<dbReference type="PANTHER" id="PTHR12899:SF3">
    <property type="entry name" value="LARGE RIBOSOMAL SUBUNIT PROTEIN UL18M"/>
    <property type="match status" value="1"/>
</dbReference>
<dbReference type="Pfam" id="PF00861">
    <property type="entry name" value="Ribosomal_L18p"/>
    <property type="match status" value="1"/>
</dbReference>
<dbReference type="SUPFAM" id="SSF53137">
    <property type="entry name" value="Translational machinery components"/>
    <property type="match status" value="1"/>
</dbReference>
<organism>
    <name type="scientific">Brucella suis (strain ATCC 23445 / NCTC 10510)</name>
    <dbReference type="NCBI Taxonomy" id="470137"/>
    <lineage>
        <taxon>Bacteria</taxon>
        <taxon>Pseudomonadati</taxon>
        <taxon>Pseudomonadota</taxon>
        <taxon>Alphaproteobacteria</taxon>
        <taxon>Hyphomicrobiales</taxon>
        <taxon>Brucellaceae</taxon>
        <taxon>Brucella/Ochrobactrum group</taxon>
        <taxon>Brucella</taxon>
    </lineage>
</organism>
<name>RL18_BRUSI</name>
<sequence>MASPKETLQRRAARVRRQVKAVANGRPRLSVHRSSKNIYAQIIDDVRGVTLAAASTLDGDLKGKLKTGADSAAAAAVGKLVAERAVKAGVKDVVFDRGAFIYHGRVKALAEAAREGGLSF</sequence>
<protein>
    <recommendedName>
        <fullName evidence="1">Large ribosomal subunit protein uL18</fullName>
    </recommendedName>
    <alternativeName>
        <fullName evidence="2">50S ribosomal protein L18</fullName>
    </alternativeName>
</protein>
<reference key="1">
    <citation type="submission" date="2007-12" db="EMBL/GenBank/DDBJ databases">
        <title>Brucella suis ATCC 23445 whole genome shotgun sequencing project.</title>
        <authorList>
            <person name="Setubal J.C."/>
            <person name="Bowns C."/>
            <person name="Boyle S."/>
            <person name="Crasta O.R."/>
            <person name="Czar M.J."/>
            <person name="Dharmanolla C."/>
            <person name="Gillespie J.J."/>
            <person name="Kenyon R.W."/>
            <person name="Lu J."/>
            <person name="Mane S."/>
            <person name="Mohapatra S."/>
            <person name="Nagrani S."/>
            <person name="Purkayastha A."/>
            <person name="Rajasimha H.K."/>
            <person name="Shallom J.M."/>
            <person name="Shallom S."/>
            <person name="Shukla M."/>
            <person name="Snyder E.E."/>
            <person name="Sobral B.W."/>
            <person name="Wattam A.R."/>
            <person name="Will R."/>
            <person name="Williams K."/>
            <person name="Yoo H."/>
            <person name="Bruce D."/>
            <person name="Detter C."/>
            <person name="Munk C."/>
            <person name="Brettin T.S."/>
        </authorList>
    </citation>
    <scope>NUCLEOTIDE SEQUENCE [LARGE SCALE GENOMIC DNA]</scope>
    <source>
        <strain>ATCC 23445 / NCTC 10510</strain>
    </source>
</reference>
<keyword id="KW-0687">Ribonucleoprotein</keyword>
<keyword id="KW-0689">Ribosomal protein</keyword>
<keyword id="KW-0694">RNA-binding</keyword>
<keyword id="KW-0699">rRNA-binding</keyword>
<evidence type="ECO:0000255" key="1">
    <source>
        <dbReference type="HAMAP-Rule" id="MF_01337"/>
    </source>
</evidence>
<evidence type="ECO:0000305" key="2"/>